<protein>
    <recommendedName>
        <fullName>Cytochrome b</fullName>
    </recommendedName>
    <alternativeName>
        <fullName>Complex III subunit 3</fullName>
    </alternativeName>
    <alternativeName>
        <fullName>Complex III subunit III</fullName>
    </alternativeName>
    <alternativeName>
        <fullName>Cytochrome b-c1 complex subunit 3</fullName>
    </alternativeName>
    <alternativeName>
        <fullName>Ubiquinol-cytochrome-c reductase complex cytochrome b subunit</fullName>
    </alternativeName>
</protein>
<accession>Q94SZ7</accession>
<sequence length="379" mass="42336">MTTIRKNHPLFKAANSALIDLPAPASLSSLWNFGSLLGLCLISQIATGLFLAMHYAPETSSAFASVAHICRDVNYGWLIRNMHANGASFFFVCIYIHIGRGLYYGSYLYKETWNIGVVLLLLVMMTAFVGYVLPWGQMSFWGATVITNLLSAVPYIGESLVQWLWGGFAVDNATLTRFFAFHFLLPFVILALTLIHLIFLHETGSNNPLGLPSNSDKIPFHPYYTIKDIFGFLVLLFTLISLALFAPNLLGDPDNFTPANSMVTPAHIKPEWYFLFAYAILRSIPNKLGGVIALLCSILVLLVVPILHTSKHRSLTFRPVTQFLFWLLIADVLVLTWIGGMPVEAPYIITGQIASALYFSLFLILMPMASWVENKMLTW</sequence>
<organism>
    <name type="scientific">Mugil cephalus</name>
    <name type="common">Flathead mullet</name>
    <name type="synonym">Mugil japonicus</name>
    <dbReference type="NCBI Taxonomy" id="48193"/>
    <lineage>
        <taxon>Eukaryota</taxon>
        <taxon>Metazoa</taxon>
        <taxon>Chordata</taxon>
        <taxon>Craniata</taxon>
        <taxon>Vertebrata</taxon>
        <taxon>Euteleostomi</taxon>
        <taxon>Actinopterygii</taxon>
        <taxon>Neopterygii</taxon>
        <taxon>Teleostei</taxon>
        <taxon>Neoteleostei</taxon>
        <taxon>Acanthomorphata</taxon>
        <taxon>Ovalentaria</taxon>
        <taxon>Mugilomorphae</taxon>
        <taxon>Mugilidae</taxon>
        <taxon>Mugil</taxon>
    </lineage>
</organism>
<feature type="chain" id="PRO_0000061212" description="Cytochrome b">
    <location>
        <begin position="1"/>
        <end position="379"/>
    </location>
</feature>
<feature type="transmembrane region" description="Helical" evidence="2">
    <location>
        <begin position="33"/>
        <end position="53"/>
    </location>
</feature>
<feature type="transmembrane region" description="Helical" evidence="2">
    <location>
        <begin position="77"/>
        <end position="98"/>
    </location>
</feature>
<feature type="transmembrane region" description="Helical" evidence="2">
    <location>
        <begin position="113"/>
        <end position="133"/>
    </location>
</feature>
<feature type="transmembrane region" description="Helical" evidence="2">
    <location>
        <begin position="178"/>
        <end position="198"/>
    </location>
</feature>
<feature type="transmembrane region" description="Helical" evidence="2">
    <location>
        <begin position="226"/>
        <end position="246"/>
    </location>
</feature>
<feature type="transmembrane region" description="Helical" evidence="2">
    <location>
        <begin position="288"/>
        <end position="308"/>
    </location>
</feature>
<feature type="transmembrane region" description="Helical" evidence="2">
    <location>
        <begin position="320"/>
        <end position="340"/>
    </location>
</feature>
<feature type="transmembrane region" description="Helical" evidence="2">
    <location>
        <begin position="347"/>
        <end position="367"/>
    </location>
</feature>
<feature type="binding site" description="axial binding residue" evidence="2">
    <location>
        <position position="83"/>
    </location>
    <ligand>
        <name>heme b</name>
        <dbReference type="ChEBI" id="CHEBI:60344"/>
        <label>b562</label>
    </ligand>
    <ligandPart>
        <name>Fe</name>
        <dbReference type="ChEBI" id="CHEBI:18248"/>
    </ligandPart>
</feature>
<feature type="binding site" description="axial binding residue" evidence="2">
    <location>
        <position position="97"/>
    </location>
    <ligand>
        <name>heme b</name>
        <dbReference type="ChEBI" id="CHEBI:60344"/>
        <label>b566</label>
    </ligand>
    <ligandPart>
        <name>Fe</name>
        <dbReference type="ChEBI" id="CHEBI:18248"/>
    </ligandPart>
</feature>
<feature type="binding site" description="axial binding residue" evidence="2">
    <location>
        <position position="182"/>
    </location>
    <ligand>
        <name>heme b</name>
        <dbReference type="ChEBI" id="CHEBI:60344"/>
        <label>b562</label>
    </ligand>
    <ligandPart>
        <name>Fe</name>
        <dbReference type="ChEBI" id="CHEBI:18248"/>
    </ligandPart>
</feature>
<feature type="binding site" description="axial binding residue" evidence="2">
    <location>
        <position position="196"/>
    </location>
    <ligand>
        <name>heme b</name>
        <dbReference type="ChEBI" id="CHEBI:60344"/>
        <label>b566</label>
    </ligand>
    <ligandPart>
        <name>Fe</name>
        <dbReference type="ChEBI" id="CHEBI:18248"/>
    </ligandPart>
</feature>
<feature type="binding site" evidence="2">
    <location>
        <position position="201"/>
    </location>
    <ligand>
        <name>a ubiquinone</name>
        <dbReference type="ChEBI" id="CHEBI:16389"/>
    </ligand>
</feature>
<evidence type="ECO:0000250" key="1"/>
<evidence type="ECO:0000250" key="2">
    <source>
        <dbReference type="UniProtKB" id="P00157"/>
    </source>
</evidence>
<evidence type="ECO:0000255" key="3">
    <source>
        <dbReference type="PROSITE-ProRule" id="PRU00967"/>
    </source>
</evidence>
<evidence type="ECO:0000255" key="4">
    <source>
        <dbReference type="PROSITE-ProRule" id="PRU00968"/>
    </source>
</evidence>
<name>CYB_MUGCE</name>
<dbReference type="EMBL" id="AP002930">
    <property type="protein sequence ID" value="BAB70182.1"/>
    <property type="molecule type" value="Genomic_DNA"/>
</dbReference>
<dbReference type="RefSeq" id="NP_443527.1">
    <property type="nucleotide sequence ID" value="NC_003182.1"/>
</dbReference>
<dbReference type="SMR" id="Q94SZ7"/>
<dbReference type="GeneID" id="803965"/>
<dbReference type="CTD" id="4519"/>
<dbReference type="GO" id="GO:0005743">
    <property type="term" value="C:mitochondrial inner membrane"/>
    <property type="evidence" value="ECO:0007669"/>
    <property type="project" value="UniProtKB-SubCell"/>
</dbReference>
<dbReference type="GO" id="GO:0045275">
    <property type="term" value="C:respiratory chain complex III"/>
    <property type="evidence" value="ECO:0007669"/>
    <property type="project" value="InterPro"/>
</dbReference>
<dbReference type="GO" id="GO:0046872">
    <property type="term" value="F:metal ion binding"/>
    <property type="evidence" value="ECO:0007669"/>
    <property type="project" value="UniProtKB-KW"/>
</dbReference>
<dbReference type="GO" id="GO:0008121">
    <property type="term" value="F:ubiquinol-cytochrome-c reductase activity"/>
    <property type="evidence" value="ECO:0007669"/>
    <property type="project" value="InterPro"/>
</dbReference>
<dbReference type="GO" id="GO:0006122">
    <property type="term" value="P:mitochondrial electron transport, ubiquinol to cytochrome c"/>
    <property type="evidence" value="ECO:0007669"/>
    <property type="project" value="TreeGrafter"/>
</dbReference>
<dbReference type="CDD" id="cd00290">
    <property type="entry name" value="cytochrome_b_C"/>
    <property type="match status" value="1"/>
</dbReference>
<dbReference type="CDD" id="cd00284">
    <property type="entry name" value="Cytochrome_b_N"/>
    <property type="match status" value="1"/>
</dbReference>
<dbReference type="FunFam" id="1.20.810.10:FF:000002">
    <property type="entry name" value="Cytochrome b"/>
    <property type="match status" value="1"/>
</dbReference>
<dbReference type="Gene3D" id="1.20.810.10">
    <property type="entry name" value="Cytochrome Bc1 Complex, Chain C"/>
    <property type="match status" value="1"/>
</dbReference>
<dbReference type="InterPro" id="IPR005798">
    <property type="entry name" value="Cyt_b/b6_C"/>
</dbReference>
<dbReference type="InterPro" id="IPR036150">
    <property type="entry name" value="Cyt_b/b6_C_sf"/>
</dbReference>
<dbReference type="InterPro" id="IPR005797">
    <property type="entry name" value="Cyt_b/b6_N"/>
</dbReference>
<dbReference type="InterPro" id="IPR027387">
    <property type="entry name" value="Cytb/b6-like_sf"/>
</dbReference>
<dbReference type="InterPro" id="IPR030689">
    <property type="entry name" value="Cytochrome_b"/>
</dbReference>
<dbReference type="InterPro" id="IPR048260">
    <property type="entry name" value="Cytochrome_b_C_euk/bac"/>
</dbReference>
<dbReference type="InterPro" id="IPR048259">
    <property type="entry name" value="Cytochrome_b_N_euk/bac"/>
</dbReference>
<dbReference type="InterPro" id="IPR016174">
    <property type="entry name" value="Di-haem_cyt_TM"/>
</dbReference>
<dbReference type="PANTHER" id="PTHR19271">
    <property type="entry name" value="CYTOCHROME B"/>
    <property type="match status" value="1"/>
</dbReference>
<dbReference type="PANTHER" id="PTHR19271:SF16">
    <property type="entry name" value="CYTOCHROME B"/>
    <property type="match status" value="1"/>
</dbReference>
<dbReference type="Pfam" id="PF00032">
    <property type="entry name" value="Cytochrom_B_C"/>
    <property type="match status" value="1"/>
</dbReference>
<dbReference type="Pfam" id="PF00033">
    <property type="entry name" value="Cytochrome_B"/>
    <property type="match status" value="1"/>
</dbReference>
<dbReference type="PIRSF" id="PIRSF038885">
    <property type="entry name" value="COB"/>
    <property type="match status" value="1"/>
</dbReference>
<dbReference type="SUPFAM" id="SSF81648">
    <property type="entry name" value="a domain/subunit of cytochrome bc1 complex (Ubiquinol-cytochrome c reductase)"/>
    <property type="match status" value="1"/>
</dbReference>
<dbReference type="SUPFAM" id="SSF81342">
    <property type="entry name" value="Transmembrane di-heme cytochromes"/>
    <property type="match status" value="1"/>
</dbReference>
<dbReference type="PROSITE" id="PS51003">
    <property type="entry name" value="CYTB_CTER"/>
    <property type="match status" value="1"/>
</dbReference>
<dbReference type="PROSITE" id="PS51002">
    <property type="entry name" value="CYTB_NTER"/>
    <property type="match status" value="1"/>
</dbReference>
<comment type="function">
    <text evidence="2">Component of the ubiquinol-cytochrome c reductase complex (complex III or cytochrome b-c1 complex) that is part of the mitochondrial respiratory chain. The b-c1 complex mediates electron transfer from ubiquinol to cytochrome c. Contributes to the generation of a proton gradient across the mitochondrial membrane that is then used for ATP synthesis.</text>
</comment>
<comment type="cofactor">
    <cofactor evidence="2">
        <name>heme b</name>
        <dbReference type="ChEBI" id="CHEBI:60344"/>
    </cofactor>
    <text evidence="2">Binds 2 heme b groups non-covalently.</text>
</comment>
<comment type="subunit">
    <text evidence="2">The cytochrome bc1 complex contains 3 respiratory subunits (MT-CYB, CYC1 and UQCRFS1), 2 core proteins (UQCRC1 and UQCRC2) and probably 6 low-molecular weight proteins.</text>
</comment>
<comment type="subcellular location">
    <subcellularLocation>
        <location evidence="2">Mitochondrion inner membrane</location>
        <topology evidence="2">Multi-pass membrane protein</topology>
    </subcellularLocation>
</comment>
<comment type="miscellaneous">
    <text evidence="1">Heme 1 (or BL or b562) is low-potential and absorbs at about 562 nm, and heme 2 (or BH or b566) is high-potential and absorbs at about 566 nm.</text>
</comment>
<comment type="similarity">
    <text evidence="3 4">Belongs to the cytochrome b family.</text>
</comment>
<comment type="caution">
    <text evidence="2">The full-length protein contains only eight transmembrane helices, not nine as predicted by bioinformatics tools.</text>
</comment>
<gene>
    <name type="primary">mt-cyb</name>
    <name type="synonym">cob</name>
    <name type="synonym">cytb</name>
    <name type="synonym">mtcyb</name>
</gene>
<geneLocation type="mitochondrion"/>
<reference key="1">
    <citation type="journal article" date="2001" name="Mol. Biol. Evol.">
        <title>Mitogenomic exploration of higher teleostean phylogenies: a case study for moderate-scale evolutionary genomics with 38 newly determined complete mitochondrial DNA sequences.</title>
        <authorList>
            <person name="Miya M."/>
            <person name="Kawaguchi A."/>
            <person name="Nishida M."/>
        </authorList>
    </citation>
    <scope>NUCLEOTIDE SEQUENCE [GENOMIC DNA]</scope>
</reference>
<proteinExistence type="inferred from homology"/>
<keyword id="KW-0249">Electron transport</keyword>
<keyword id="KW-0349">Heme</keyword>
<keyword id="KW-0408">Iron</keyword>
<keyword id="KW-0472">Membrane</keyword>
<keyword id="KW-0479">Metal-binding</keyword>
<keyword id="KW-0496">Mitochondrion</keyword>
<keyword id="KW-0999">Mitochondrion inner membrane</keyword>
<keyword id="KW-0679">Respiratory chain</keyword>
<keyword id="KW-0812">Transmembrane</keyword>
<keyword id="KW-1133">Transmembrane helix</keyword>
<keyword id="KW-0813">Transport</keyword>
<keyword id="KW-0830">Ubiquinone</keyword>